<organismHost>
    <name type="scientific">Saccharum officinarum</name>
    <name type="common">Sugarcane</name>
    <dbReference type="NCBI Taxonomy" id="4547"/>
</organismHost>
<evidence type="ECO:0000305" key="1"/>
<sequence>MTSISLTIAPDLIHCGVPQRLSDTIILNDKPKITLLSYFDNIFTEANIIKAPKEHSVQSTVNIYVKLELLKRLYDRLQSVDTSTLPYISQIKEALRSFLHNDIQYVFTRIPDSEIDGNYVGVTTHGLSLFANAKNDAEEIERVQIDTPTEGNLTLKPISADGVEVVLDDSYINAVSKVIGPDVHKLIDKCCKEFPAHVGTILEEVKYCLILGKLRLAGGYDYNCPSSTTDVTRYGDFDKFRIKMFNKLTRFYNVSLALVPCNKLKMQYIFDSESEKINGDRTFLDQAWPAITSFIETHDLATKVKTDDPDTYVLKEVKSCKINSSTKQATLVNLDGNKLEWYKNNIYNAKLEDGIVINRELYEKAADKSYIKYNVKVVFASYALQKIIDEKSDKSITVDTSAGEMTLDKYRAIANVLNSIWKRGKDMAIKYFDYIKMGIEKATHLSLNLMKKYNITLDDVVSFIEKGPGYLATLQKLNDYKLIAKIIICHILPTIIQCVYKSDPNSKIMNSTLITNAVNLIRQDTKRYESSTGRKDANLVTHDASSLPLIRIYKT</sequence>
<reference key="1">
    <citation type="journal article" date="2004" name="Arch. Virol.">
        <title>Molecular analysis of Fiji disease virus genome segments 5, 6, 8 and 10.</title>
        <authorList>
            <person name="McQualter R.B."/>
            <person name="Burns P."/>
            <person name="Smith G.R."/>
            <person name="Dale J.L."/>
            <person name="Harding R.M."/>
        </authorList>
    </citation>
    <scope>NUCLEOTIDE SEQUENCE [GENOMIC RNA]</scope>
</reference>
<comment type="subcellular location">
    <subcellularLocation>
        <location evidence="1">Virion</location>
    </subcellularLocation>
</comment>
<gene>
    <name type="primary">S10</name>
</gene>
<dbReference type="EMBL" id="AY297694">
    <property type="protein sequence ID" value="AAP57258.1"/>
    <property type="molecule type" value="Genomic_RNA"/>
</dbReference>
<dbReference type="RefSeq" id="YP_249765.1">
    <property type="nucleotide sequence ID" value="NC_007162.1"/>
</dbReference>
<dbReference type="KEGG" id="vg:5075885"/>
<dbReference type="Proteomes" id="UP000001677">
    <property type="component" value="Genome"/>
</dbReference>
<dbReference type="GO" id="GO:0019028">
    <property type="term" value="C:viral capsid"/>
    <property type="evidence" value="ECO:0007669"/>
    <property type="project" value="UniProtKB-KW"/>
</dbReference>
<dbReference type="InterPro" id="IPR008618">
    <property type="entry name" value="S10"/>
</dbReference>
<dbReference type="Pfam" id="PF05880">
    <property type="entry name" value="Fiji_64_capsid"/>
    <property type="match status" value="1"/>
</dbReference>
<proteinExistence type="predicted"/>
<organism>
    <name type="scientific">Fiji disease virus (isolate Sugarcane)</name>
    <name type="common">FDV</name>
    <dbReference type="NCBI Taxonomy" id="648172"/>
    <lineage>
        <taxon>Viruses</taxon>
        <taxon>Riboviria</taxon>
        <taxon>Orthornavirae</taxon>
        <taxon>Duplornaviricota</taxon>
        <taxon>Resentoviricetes</taxon>
        <taxon>Reovirales</taxon>
        <taxon>Spinareoviridae</taxon>
        <taxon>Fijivirus</taxon>
        <taxon>Fiji disease virus</taxon>
    </lineage>
</organism>
<name>VP10_FDVS</name>
<keyword id="KW-0167">Capsid protein</keyword>
<keyword id="KW-1185">Reference proteome</keyword>
<keyword id="KW-0946">Virion</keyword>
<protein>
    <recommendedName>
        <fullName>Putative outer capsid protein p10</fullName>
    </recommendedName>
</protein>
<accession>Q7TF74</accession>
<feature type="chain" id="PRO_0000403403" description="Putative outer capsid protein p10">
    <location>
        <begin position="1"/>
        <end position="555"/>
    </location>
</feature>